<protein>
    <recommendedName>
        <fullName>Uncharacterized protein R721</fullName>
    </recommendedName>
</protein>
<accession>Q5UNX9</accession>
<keyword id="KW-1185">Reference proteome</keyword>
<keyword id="KW-0946">Virion</keyword>
<organismHost>
    <name type="scientific">Acanthamoeba polyphaga</name>
    <name type="common">Amoeba</name>
    <dbReference type="NCBI Taxonomy" id="5757"/>
</organismHost>
<feature type="chain" id="PRO_0000244055" description="Uncharacterized protein R721">
    <location>
        <begin position="1"/>
        <end position="270"/>
    </location>
</feature>
<name>YR721_MIMIV</name>
<comment type="subcellular location">
    <subcellularLocation>
        <location evidence="1">Virion</location>
    </subcellularLocation>
</comment>
<proteinExistence type="evidence at protein level"/>
<reference key="1">
    <citation type="journal article" date="2004" name="Science">
        <title>The 1.2-megabase genome sequence of Mimivirus.</title>
        <authorList>
            <person name="Raoult D."/>
            <person name="Audic S."/>
            <person name="Robert C."/>
            <person name="Abergel C."/>
            <person name="Renesto P."/>
            <person name="Ogata H."/>
            <person name="La Scola B."/>
            <person name="Susan M."/>
            <person name="Claverie J.-M."/>
        </authorList>
    </citation>
    <scope>NUCLEOTIDE SEQUENCE [LARGE SCALE GENOMIC DNA]</scope>
    <source>
        <strain>Rowbotham-Bradford</strain>
    </source>
</reference>
<reference key="2">
    <citation type="journal article" date="2006" name="J. Virol.">
        <title>Mimivirus giant particles incorporate a large fraction of anonymous and unique gene products.</title>
        <authorList>
            <person name="Renesto P."/>
            <person name="Abergel C."/>
            <person name="Decloquement P."/>
            <person name="Moinier D."/>
            <person name="Azza S."/>
            <person name="Ogata H."/>
            <person name="Fourquet P."/>
            <person name="Gorvel J.-P."/>
            <person name="Claverie J.-M."/>
            <person name="Raoult D."/>
        </authorList>
    </citation>
    <scope>IDENTIFICATION BY MASS SPECTROMETRY [LARGE SCALE ANALYSIS]</scope>
    <scope>SUBCELLULAR LOCATION</scope>
</reference>
<sequence length="270" mass="31169">MYTSTKPDKQNKLKKLIYNEKYHDNCHDYLKTTYLEKYAEPRYKKLLYKIREKIPKVGICEDTVFDDYRNVIVCDQHAVIFGHYNDVFPILATYALNACVGLVMYVPKHKIGALAHIDGLPGYSQESAKEDGLELDFSPVYENIEIMIRYLKQLSGSDESLEITYYLIGGIYGLSEVMVHDILEAINKIQNDKLKFNFMGRNLLGPGNQSRNICIDMATGKITYFDYTINSEYYGKNRKDNVPMNIIRAPRKSEAYLDITYVPISIDDSQ</sequence>
<dbReference type="EMBL" id="AY653733">
    <property type="protein sequence ID" value="AAV50981.1"/>
    <property type="molecule type" value="Genomic_DNA"/>
</dbReference>
<dbReference type="SMR" id="Q5UNX9"/>
<dbReference type="KEGG" id="vg:9925375"/>
<dbReference type="OrthoDB" id="10263at10239"/>
<dbReference type="Proteomes" id="UP000001134">
    <property type="component" value="Genome"/>
</dbReference>
<dbReference type="GO" id="GO:0044423">
    <property type="term" value="C:virion component"/>
    <property type="evidence" value="ECO:0007669"/>
    <property type="project" value="UniProtKB-KW"/>
</dbReference>
<dbReference type="Gene3D" id="3.30.1330.200">
    <property type="match status" value="1"/>
</dbReference>
<dbReference type="InterPro" id="IPR038592">
    <property type="entry name" value="CheD-like_sf"/>
</dbReference>
<organism>
    <name type="scientific">Acanthamoeba polyphaga mimivirus</name>
    <name type="common">APMV</name>
    <dbReference type="NCBI Taxonomy" id="212035"/>
    <lineage>
        <taxon>Viruses</taxon>
        <taxon>Varidnaviria</taxon>
        <taxon>Bamfordvirae</taxon>
        <taxon>Nucleocytoviricota</taxon>
        <taxon>Megaviricetes</taxon>
        <taxon>Imitervirales</taxon>
        <taxon>Mimiviridae</taxon>
        <taxon>Megamimivirinae</taxon>
        <taxon>Mimivirus</taxon>
        <taxon>Mimivirus bradfordmassiliense</taxon>
    </lineage>
</organism>
<evidence type="ECO:0000269" key="1">
    <source>
    </source>
</evidence>
<gene>
    <name type="ordered locus">MIMI_R721</name>
</gene>